<proteinExistence type="inferred from homology"/>
<name>KAT6_ORYSJ</name>
<keyword id="KW-0407">Ion channel</keyword>
<keyword id="KW-0406">Ion transport</keyword>
<keyword id="KW-0472">Membrane</keyword>
<keyword id="KW-0630">Potassium</keyword>
<keyword id="KW-0631">Potassium channel</keyword>
<keyword id="KW-0633">Potassium transport</keyword>
<keyword id="KW-1185">Reference proteome</keyword>
<keyword id="KW-0812">Transmembrane</keyword>
<keyword id="KW-1133">Transmembrane helix</keyword>
<keyword id="KW-0813">Transport</keyword>
<keyword id="KW-0851">Voltage-gated channel</keyword>
<protein>
    <recommendedName>
        <fullName>Potassium channel KAT6</fullName>
    </recommendedName>
</protein>
<organism>
    <name type="scientific">Oryza sativa subsp. japonica</name>
    <name type="common">Rice</name>
    <dbReference type="NCBI Taxonomy" id="39947"/>
    <lineage>
        <taxon>Eukaryota</taxon>
        <taxon>Viridiplantae</taxon>
        <taxon>Streptophyta</taxon>
        <taxon>Embryophyta</taxon>
        <taxon>Tracheophyta</taxon>
        <taxon>Spermatophyta</taxon>
        <taxon>Magnoliopsida</taxon>
        <taxon>Liliopsida</taxon>
        <taxon>Poales</taxon>
        <taxon>Poaceae</taxon>
        <taxon>BOP clade</taxon>
        <taxon>Oryzoideae</taxon>
        <taxon>Oryzeae</taxon>
        <taxon>Oryzinae</taxon>
        <taxon>Oryza</taxon>
        <taxon>Oryza sativa</taxon>
    </lineage>
</organism>
<accession>A2ZX97</accession>
<sequence>MAASRSELLRPAFGEPSPSLGPFVVNPHTCSYRWWQKFLIVLVLYTAWASPFELAMEKSASAALAVTELVVDAFFAVDIAVSFFVAYRDASTGLLVTDRKKIATRHLARPCLALDVASTIPLQMIYRIVSGKRQALYGLLNLLRLWRLRRVSKLFARLEKDIRFSYLWTRLIKLLYVTLFAVHFASCIYLWMAFHHKAKELTWIGSQFHGFEDRSVWFCYTCAVYWSITTLATVGYGDLHAANTGEMLFSIAFMLFNMGLTSYIIGNITNLVVHETTNTFKMRDMVQRTSVFGRTNRLPVAMREQMMESLQLRFRAEEQLQQEMLSELPKAVRSGIAQHMFRGAVQSCYLFQGVSDKLVLPLVAEMKAESFPPKADIILENEASTDCYIIVSGEVEVLTTLEDGTEKQVMRIGPRGMAGEIGVMFNIPQPFTIRSRKLTQLVRISHSHMVSTIRPNTADGVVVFSNFVLYLESLKVKAKETAFVRDHLRNGYSTVLGSATMFDVDESKESAHKMLPCKEPKRVSIHEHLLNGTGTALNGSSGKLVILPDSMQDLMKLSEKKFGKAARGILTVGGAEVEDIEVIRDGDHLFFSW</sequence>
<gene>
    <name type="ordered locus">Os01g0718700</name>
    <name type="ordered locus">LOC_Os01g52070</name>
    <name type="ORF">OsJ_03266</name>
</gene>
<evidence type="ECO:0000250" key="1"/>
<evidence type="ECO:0000255" key="2"/>
<evidence type="ECO:0000255" key="3">
    <source>
        <dbReference type="PROSITE-ProRule" id="PRU00823"/>
    </source>
</evidence>
<evidence type="ECO:0000305" key="4"/>
<reference key="1">
    <citation type="journal article" date="2005" name="Nature">
        <title>The map-based sequence of the rice genome.</title>
        <authorList>
            <consortium name="International rice genome sequencing project (IRGSP)"/>
        </authorList>
    </citation>
    <scope>NUCLEOTIDE SEQUENCE [LARGE SCALE GENOMIC DNA]</scope>
    <source>
        <strain>cv. Nipponbare</strain>
    </source>
</reference>
<reference key="2">
    <citation type="journal article" date="2008" name="Nucleic Acids Res.">
        <title>The rice annotation project database (RAP-DB): 2008 update.</title>
        <authorList>
            <consortium name="The rice annotation project (RAP)"/>
        </authorList>
    </citation>
    <scope>GENOME REANNOTATION</scope>
    <source>
        <strain>cv. Nipponbare</strain>
    </source>
</reference>
<reference key="3">
    <citation type="journal article" date="2013" name="Rice">
        <title>Improvement of the Oryza sativa Nipponbare reference genome using next generation sequence and optical map data.</title>
        <authorList>
            <person name="Kawahara Y."/>
            <person name="de la Bastide M."/>
            <person name="Hamilton J.P."/>
            <person name="Kanamori H."/>
            <person name="McCombie W.R."/>
            <person name="Ouyang S."/>
            <person name="Schwartz D.C."/>
            <person name="Tanaka T."/>
            <person name="Wu J."/>
            <person name="Zhou S."/>
            <person name="Childs K.L."/>
            <person name="Davidson R.M."/>
            <person name="Lin H."/>
            <person name="Quesada-Ocampo L."/>
            <person name="Vaillancourt B."/>
            <person name="Sakai H."/>
            <person name="Lee S.S."/>
            <person name="Kim J."/>
            <person name="Numa H."/>
            <person name="Itoh T."/>
            <person name="Buell C.R."/>
            <person name="Matsumoto T."/>
        </authorList>
    </citation>
    <scope>GENOME REANNOTATION</scope>
    <source>
        <strain>cv. Nipponbare</strain>
    </source>
</reference>
<reference key="4">
    <citation type="journal article" date="2005" name="PLoS Biol.">
        <title>The genomes of Oryza sativa: a history of duplications.</title>
        <authorList>
            <person name="Yu J."/>
            <person name="Wang J."/>
            <person name="Lin W."/>
            <person name="Li S."/>
            <person name="Li H."/>
            <person name="Zhou J."/>
            <person name="Ni P."/>
            <person name="Dong W."/>
            <person name="Hu S."/>
            <person name="Zeng C."/>
            <person name="Zhang J."/>
            <person name="Zhang Y."/>
            <person name="Li R."/>
            <person name="Xu Z."/>
            <person name="Li S."/>
            <person name="Li X."/>
            <person name="Zheng H."/>
            <person name="Cong L."/>
            <person name="Lin L."/>
            <person name="Yin J."/>
            <person name="Geng J."/>
            <person name="Li G."/>
            <person name="Shi J."/>
            <person name="Liu J."/>
            <person name="Lv H."/>
            <person name="Li J."/>
            <person name="Wang J."/>
            <person name="Deng Y."/>
            <person name="Ran L."/>
            <person name="Shi X."/>
            <person name="Wang X."/>
            <person name="Wu Q."/>
            <person name="Li C."/>
            <person name="Ren X."/>
            <person name="Wang J."/>
            <person name="Wang X."/>
            <person name="Li D."/>
            <person name="Liu D."/>
            <person name="Zhang X."/>
            <person name="Ji Z."/>
            <person name="Zhao W."/>
            <person name="Sun Y."/>
            <person name="Zhang Z."/>
            <person name="Bao J."/>
            <person name="Han Y."/>
            <person name="Dong L."/>
            <person name="Ji J."/>
            <person name="Chen P."/>
            <person name="Wu S."/>
            <person name="Liu J."/>
            <person name="Xiao Y."/>
            <person name="Bu D."/>
            <person name="Tan J."/>
            <person name="Yang L."/>
            <person name="Ye C."/>
            <person name="Zhang J."/>
            <person name="Xu J."/>
            <person name="Zhou Y."/>
            <person name="Yu Y."/>
            <person name="Zhang B."/>
            <person name="Zhuang S."/>
            <person name="Wei H."/>
            <person name="Liu B."/>
            <person name="Lei M."/>
            <person name="Yu H."/>
            <person name="Li Y."/>
            <person name="Xu H."/>
            <person name="Wei S."/>
            <person name="He X."/>
            <person name="Fang L."/>
            <person name="Zhang Z."/>
            <person name="Zhang Y."/>
            <person name="Huang X."/>
            <person name="Su Z."/>
            <person name="Tong W."/>
            <person name="Li J."/>
            <person name="Tong Z."/>
            <person name="Li S."/>
            <person name="Ye J."/>
            <person name="Wang L."/>
            <person name="Fang L."/>
            <person name="Lei T."/>
            <person name="Chen C.-S."/>
            <person name="Chen H.-C."/>
            <person name="Xu Z."/>
            <person name="Li H."/>
            <person name="Huang H."/>
            <person name="Zhang F."/>
            <person name="Xu H."/>
            <person name="Li N."/>
            <person name="Zhao C."/>
            <person name="Li S."/>
            <person name="Dong L."/>
            <person name="Huang Y."/>
            <person name="Li L."/>
            <person name="Xi Y."/>
            <person name="Qi Q."/>
            <person name="Li W."/>
            <person name="Zhang B."/>
            <person name="Hu W."/>
            <person name="Zhang Y."/>
            <person name="Tian X."/>
            <person name="Jiao Y."/>
            <person name="Liang X."/>
            <person name="Jin J."/>
            <person name="Gao L."/>
            <person name="Zheng W."/>
            <person name="Hao B."/>
            <person name="Liu S.-M."/>
            <person name="Wang W."/>
            <person name="Yuan L."/>
            <person name="Cao M."/>
            <person name="McDermott J."/>
            <person name="Samudrala R."/>
            <person name="Wang J."/>
            <person name="Wong G.K.-S."/>
            <person name="Yang H."/>
        </authorList>
    </citation>
    <scope>NUCLEOTIDE SEQUENCE [LARGE SCALE GENOMIC DNA]</scope>
    <source>
        <strain>cv. Nipponbare</strain>
    </source>
</reference>
<feature type="chain" id="PRO_0000410882" description="Potassium channel KAT6">
    <location>
        <begin position="1"/>
        <end position="593"/>
    </location>
</feature>
<feature type="topological domain" description="Cytoplasmic" evidence="2">
    <location>
        <begin position="1"/>
        <end position="33"/>
    </location>
</feature>
<feature type="transmembrane region" description="Helical; Name=Segment S1" evidence="2">
    <location>
        <begin position="34"/>
        <end position="54"/>
    </location>
</feature>
<feature type="topological domain" description="Extracellular" evidence="2">
    <location>
        <begin position="55"/>
        <end position="64"/>
    </location>
</feature>
<feature type="transmembrane region" description="Helical; Name=Segment S2" evidence="2">
    <location>
        <begin position="65"/>
        <end position="85"/>
    </location>
</feature>
<feature type="topological domain" description="Cytoplasmic" evidence="2">
    <location>
        <begin position="86"/>
        <end position="106"/>
    </location>
</feature>
<feature type="transmembrane region" description="Helical; Name=Segment S3" evidence="2">
    <location>
        <begin position="107"/>
        <end position="129"/>
    </location>
</feature>
<feature type="topological domain" description="Extracellular" evidence="2">
    <location>
        <begin position="130"/>
        <end position="138"/>
    </location>
</feature>
<feature type="transmembrane region" description="Helical; Voltage-sensor; Name=Segment S4" evidence="2">
    <location>
        <begin position="139"/>
        <end position="159"/>
    </location>
</feature>
<feature type="topological domain" description="Cytoplasmic" evidence="2">
    <location>
        <begin position="160"/>
        <end position="173"/>
    </location>
</feature>
<feature type="transmembrane region" description="Helical; Name=Segment S5" evidence="2">
    <location>
        <begin position="174"/>
        <end position="194"/>
    </location>
</feature>
<feature type="topological domain" description="Extracellular" evidence="2">
    <location>
        <begin position="195"/>
        <end position="221"/>
    </location>
</feature>
<feature type="intramembrane region" description="Pore-forming; Name=Segment H5" evidence="2">
    <location>
        <begin position="222"/>
        <end position="241"/>
    </location>
</feature>
<feature type="topological domain" description="Extracellular" evidence="2">
    <location>
        <begin position="242"/>
        <end position="247"/>
    </location>
</feature>
<feature type="transmembrane region" description="Helical; Name=Segment S6" evidence="2">
    <location>
        <begin position="248"/>
        <end position="268"/>
    </location>
</feature>
<feature type="topological domain" description="Cytoplasmic" evidence="2">
    <location>
        <begin position="269"/>
        <end position="593"/>
    </location>
</feature>
<feature type="domain" description="KHA" evidence="3">
    <location>
        <begin position="522"/>
        <end position="593"/>
    </location>
</feature>
<feature type="binding site">
    <location>
        <begin position="350"/>
        <end position="470"/>
    </location>
    <ligand>
        <name>a nucleoside 3',5'-cyclic phosphate</name>
        <dbReference type="ChEBI" id="CHEBI:58464"/>
    </ligand>
</feature>
<dbReference type="EMBL" id="AP008207">
    <property type="status" value="NOT_ANNOTATED_CDS"/>
    <property type="molecule type" value="Genomic_DNA"/>
</dbReference>
<dbReference type="EMBL" id="AP014957">
    <property type="status" value="NOT_ANNOTATED_CDS"/>
    <property type="molecule type" value="Genomic_DNA"/>
</dbReference>
<dbReference type="EMBL" id="CM000138">
    <property type="protein sequence ID" value="EAZ13344.1"/>
    <property type="molecule type" value="Genomic_DNA"/>
</dbReference>
<dbReference type="SMR" id="A2ZX97"/>
<dbReference type="FunCoup" id="A2ZX97">
    <property type="interactions" value="980"/>
</dbReference>
<dbReference type="STRING" id="39947.A2ZX97"/>
<dbReference type="PaxDb" id="39947-A2ZX97"/>
<dbReference type="eggNOG" id="KOG0498">
    <property type="taxonomic scope" value="Eukaryota"/>
</dbReference>
<dbReference type="InParanoid" id="A2ZX97"/>
<dbReference type="Proteomes" id="UP000000763">
    <property type="component" value="Chromosome 1"/>
</dbReference>
<dbReference type="Proteomes" id="UP000007752">
    <property type="component" value="Chromosome 1"/>
</dbReference>
<dbReference type="Proteomes" id="UP000059680">
    <property type="component" value="Chromosome 1"/>
</dbReference>
<dbReference type="GO" id="GO:0034702">
    <property type="term" value="C:monoatomic ion channel complex"/>
    <property type="evidence" value="ECO:0007669"/>
    <property type="project" value="UniProtKB-KW"/>
</dbReference>
<dbReference type="GO" id="GO:0005249">
    <property type="term" value="F:voltage-gated potassium channel activity"/>
    <property type="evidence" value="ECO:0007669"/>
    <property type="project" value="InterPro"/>
</dbReference>
<dbReference type="CDD" id="cd00038">
    <property type="entry name" value="CAP_ED"/>
    <property type="match status" value="1"/>
</dbReference>
<dbReference type="FunFam" id="2.60.120.10:FF:000074">
    <property type="entry name" value="Potassium channel KAT2"/>
    <property type="match status" value="1"/>
</dbReference>
<dbReference type="FunFam" id="1.10.287.70:FF:000123">
    <property type="entry name" value="Potassium channel KAT3"/>
    <property type="match status" value="1"/>
</dbReference>
<dbReference type="Gene3D" id="1.10.287.70">
    <property type="match status" value="1"/>
</dbReference>
<dbReference type="Gene3D" id="2.60.120.10">
    <property type="entry name" value="Jelly Rolls"/>
    <property type="match status" value="1"/>
</dbReference>
<dbReference type="InterPro" id="IPR000595">
    <property type="entry name" value="cNMP-bd_dom"/>
</dbReference>
<dbReference type="InterPro" id="IPR018490">
    <property type="entry name" value="cNMP-bd_dom_sf"/>
</dbReference>
<dbReference type="InterPro" id="IPR005821">
    <property type="entry name" value="Ion_trans_dom"/>
</dbReference>
<dbReference type="InterPro" id="IPR003938">
    <property type="entry name" value="K_chnl_volt-dep_EAG/ELK/ERG"/>
</dbReference>
<dbReference type="InterPro" id="IPR045319">
    <property type="entry name" value="KAT/AKT"/>
</dbReference>
<dbReference type="InterPro" id="IPR021789">
    <property type="entry name" value="KHA_dom"/>
</dbReference>
<dbReference type="InterPro" id="IPR014710">
    <property type="entry name" value="RmlC-like_jellyroll"/>
</dbReference>
<dbReference type="PANTHER" id="PTHR45743">
    <property type="entry name" value="POTASSIUM CHANNEL AKT1"/>
    <property type="match status" value="1"/>
</dbReference>
<dbReference type="PANTHER" id="PTHR45743:SF27">
    <property type="entry name" value="POTASSIUM CHANNEL KAT3"/>
    <property type="match status" value="1"/>
</dbReference>
<dbReference type="Pfam" id="PF00027">
    <property type="entry name" value="cNMP_binding"/>
    <property type="match status" value="1"/>
</dbReference>
<dbReference type="Pfam" id="PF00520">
    <property type="entry name" value="Ion_trans"/>
    <property type="match status" value="1"/>
</dbReference>
<dbReference type="Pfam" id="PF11834">
    <property type="entry name" value="KHA"/>
    <property type="match status" value="1"/>
</dbReference>
<dbReference type="PRINTS" id="PR01463">
    <property type="entry name" value="EAGCHANLFMLY"/>
</dbReference>
<dbReference type="SMART" id="SM00100">
    <property type="entry name" value="cNMP"/>
    <property type="match status" value="1"/>
</dbReference>
<dbReference type="SUPFAM" id="SSF51206">
    <property type="entry name" value="cAMP-binding domain-like"/>
    <property type="match status" value="1"/>
</dbReference>
<dbReference type="SUPFAM" id="SSF81324">
    <property type="entry name" value="Voltage-gated potassium channels"/>
    <property type="match status" value="1"/>
</dbReference>
<dbReference type="PROSITE" id="PS50042">
    <property type="entry name" value="CNMP_BINDING_3"/>
    <property type="match status" value="1"/>
</dbReference>
<dbReference type="PROSITE" id="PS51490">
    <property type="entry name" value="KHA"/>
    <property type="match status" value="1"/>
</dbReference>
<comment type="function">
    <text evidence="1">Probable inward-rectifying potassium channel. Assuming opened or closed conformations in response to the voltage difference across the membrane, the channel is activated by hyperpolarization (By similarity).</text>
</comment>
<comment type="subcellular location">
    <subcellularLocation>
        <location evidence="4">Membrane</location>
        <topology evidence="4">Multi-pass membrane protein</topology>
    </subcellularLocation>
</comment>
<comment type="domain">
    <text evidence="1">The segment S4 is probably the voltage-sensor and is characterized by a series of positively charged amino acids. The pore-forming region H5 is enclosed by the transmembrane segments S5 and S6 in the Shaker-type (1P/6TM) and contains the GYGD signature motif which seems to be involved in potassium selectivity (By similarity).</text>
</comment>
<comment type="domain">
    <text evidence="1">The KHA domain (rich in hydrophobic and acidic residues) present in the C-terminal part is likely to be important for tetramerization.</text>
</comment>
<comment type="similarity">
    <text evidence="4">Belongs to the potassium channel family. Plant (TC 1.A.1.4) subfamily.</text>
</comment>